<name>EFP_RHIWR</name>
<gene>
    <name evidence="1" type="primary">efp</name>
    <name type="ordered locus">Swit_2980</name>
</gene>
<proteinExistence type="inferred from homology"/>
<organism>
    <name type="scientific">Rhizorhabdus wittichii (strain DSM 6014 / CCUG 31198 / JCM 15750 / NBRC 105917 / EY 4224 / RW1)</name>
    <name type="common">Sphingomonas wittichii</name>
    <dbReference type="NCBI Taxonomy" id="392499"/>
    <lineage>
        <taxon>Bacteria</taxon>
        <taxon>Pseudomonadati</taxon>
        <taxon>Pseudomonadota</taxon>
        <taxon>Alphaproteobacteria</taxon>
        <taxon>Sphingomonadales</taxon>
        <taxon>Sphingomonadaceae</taxon>
        <taxon>Rhizorhabdus</taxon>
    </lineage>
</organism>
<keyword id="KW-0963">Cytoplasm</keyword>
<keyword id="KW-0251">Elongation factor</keyword>
<keyword id="KW-0648">Protein biosynthesis</keyword>
<keyword id="KW-1185">Reference proteome</keyword>
<accession>A5VAL5</accession>
<feature type="chain" id="PRO_1000010863" description="Elongation factor P">
    <location>
        <begin position="1"/>
        <end position="187"/>
    </location>
</feature>
<sequence>MKISGVDIRPGNIIEYEGGIWRAVKIQHTQPGKGGAYMQVEMKNLIDGRKNNVRFRSAETVERVRLDTKDFQFLFAEGEDLTFMDKDTYEQITLPRDLLGDAAAFLQDGMDVVMELYEERPISVQLPDQVEATIVEADAVVKGQTASSSYKPAMLDNGVRVMVPPHISSGTRIVVDVYEQTYVRRAD</sequence>
<protein>
    <recommendedName>
        <fullName evidence="1">Elongation factor P</fullName>
        <shortName evidence="1">EF-P</shortName>
    </recommendedName>
</protein>
<evidence type="ECO:0000255" key="1">
    <source>
        <dbReference type="HAMAP-Rule" id="MF_00141"/>
    </source>
</evidence>
<comment type="function">
    <text evidence="1">Involved in peptide bond synthesis. Stimulates efficient translation and peptide-bond synthesis on native or reconstituted 70S ribosomes in vitro. Probably functions indirectly by altering the affinity of the ribosome for aminoacyl-tRNA, thus increasing their reactivity as acceptors for peptidyl transferase.</text>
</comment>
<comment type="pathway">
    <text evidence="1">Protein biosynthesis; polypeptide chain elongation.</text>
</comment>
<comment type="subcellular location">
    <subcellularLocation>
        <location evidence="1">Cytoplasm</location>
    </subcellularLocation>
</comment>
<comment type="similarity">
    <text evidence="1">Belongs to the elongation factor P family.</text>
</comment>
<reference key="1">
    <citation type="journal article" date="2010" name="J. Bacteriol.">
        <title>Genome sequence of the dioxin-mineralizing bacterium Sphingomonas wittichii RW1.</title>
        <authorList>
            <person name="Miller T.R."/>
            <person name="Delcher A.L."/>
            <person name="Salzberg S.L."/>
            <person name="Saunders E."/>
            <person name="Detter J.C."/>
            <person name="Halden R.U."/>
        </authorList>
    </citation>
    <scope>NUCLEOTIDE SEQUENCE [LARGE SCALE GENOMIC DNA]</scope>
    <source>
        <strain>DSM 6014 / CCUG 31198 / JCM 15750 / NBRC 105917 / EY 4224 / RW1</strain>
    </source>
</reference>
<dbReference type="EMBL" id="CP000699">
    <property type="protein sequence ID" value="ABQ69331.1"/>
    <property type="molecule type" value="Genomic_DNA"/>
</dbReference>
<dbReference type="SMR" id="A5VAL5"/>
<dbReference type="STRING" id="392499.Swit_2980"/>
<dbReference type="PaxDb" id="392499-Swit_2980"/>
<dbReference type="KEGG" id="swi:Swit_2980"/>
<dbReference type="eggNOG" id="COG0231">
    <property type="taxonomic scope" value="Bacteria"/>
</dbReference>
<dbReference type="HOGENOM" id="CLU_074944_1_1_5"/>
<dbReference type="OrthoDB" id="9801844at2"/>
<dbReference type="UniPathway" id="UPA00345"/>
<dbReference type="Proteomes" id="UP000001989">
    <property type="component" value="Chromosome"/>
</dbReference>
<dbReference type="GO" id="GO:0005737">
    <property type="term" value="C:cytoplasm"/>
    <property type="evidence" value="ECO:0007669"/>
    <property type="project" value="UniProtKB-SubCell"/>
</dbReference>
<dbReference type="GO" id="GO:0003746">
    <property type="term" value="F:translation elongation factor activity"/>
    <property type="evidence" value="ECO:0007669"/>
    <property type="project" value="UniProtKB-UniRule"/>
</dbReference>
<dbReference type="GO" id="GO:0043043">
    <property type="term" value="P:peptide biosynthetic process"/>
    <property type="evidence" value="ECO:0007669"/>
    <property type="project" value="InterPro"/>
</dbReference>
<dbReference type="CDD" id="cd04470">
    <property type="entry name" value="S1_EF-P_repeat_1"/>
    <property type="match status" value="1"/>
</dbReference>
<dbReference type="CDD" id="cd05794">
    <property type="entry name" value="S1_EF-P_repeat_2"/>
    <property type="match status" value="1"/>
</dbReference>
<dbReference type="FunFam" id="2.30.30.30:FF:000003">
    <property type="entry name" value="Elongation factor P"/>
    <property type="match status" value="1"/>
</dbReference>
<dbReference type="FunFam" id="2.40.50.140:FF:000004">
    <property type="entry name" value="Elongation factor P"/>
    <property type="match status" value="1"/>
</dbReference>
<dbReference type="FunFam" id="2.40.50.140:FF:000009">
    <property type="entry name" value="Elongation factor P"/>
    <property type="match status" value="1"/>
</dbReference>
<dbReference type="Gene3D" id="2.30.30.30">
    <property type="match status" value="1"/>
</dbReference>
<dbReference type="Gene3D" id="2.40.50.140">
    <property type="entry name" value="Nucleic acid-binding proteins"/>
    <property type="match status" value="2"/>
</dbReference>
<dbReference type="HAMAP" id="MF_00141">
    <property type="entry name" value="EF_P"/>
    <property type="match status" value="1"/>
</dbReference>
<dbReference type="InterPro" id="IPR015365">
    <property type="entry name" value="Elong-fact-P_C"/>
</dbReference>
<dbReference type="InterPro" id="IPR012340">
    <property type="entry name" value="NA-bd_OB-fold"/>
</dbReference>
<dbReference type="InterPro" id="IPR014722">
    <property type="entry name" value="Rib_uL2_dom2"/>
</dbReference>
<dbReference type="InterPro" id="IPR020599">
    <property type="entry name" value="Transl_elong_fac_P/YeiP"/>
</dbReference>
<dbReference type="InterPro" id="IPR013185">
    <property type="entry name" value="Transl_elong_KOW-like"/>
</dbReference>
<dbReference type="InterPro" id="IPR001059">
    <property type="entry name" value="Transl_elong_P/YeiP_cen"/>
</dbReference>
<dbReference type="InterPro" id="IPR013852">
    <property type="entry name" value="Transl_elong_P/YeiP_CS"/>
</dbReference>
<dbReference type="InterPro" id="IPR011768">
    <property type="entry name" value="Transl_elongation_fac_P"/>
</dbReference>
<dbReference type="InterPro" id="IPR008991">
    <property type="entry name" value="Translation_prot_SH3-like_sf"/>
</dbReference>
<dbReference type="NCBIfam" id="TIGR00038">
    <property type="entry name" value="efp"/>
    <property type="match status" value="1"/>
</dbReference>
<dbReference type="NCBIfam" id="NF001810">
    <property type="entry name" value="PRK00529.1"/>
    <property type="match status" value="1"/>
</dbReference>
<dbReference type="PANTHER" id="PTHR30053">
    <property type="entry name" value="ELONGATION FACTOR P"/>
    <property type="match status" value="1"/>
</dbReference>
<dbReference type="PANTHER" id="PTHR30053:SF14">
    <property type="entry name" value="TRANSLATION ELONGATION FACTOR KOW-LIKE DOMAIN-CONTAINING PROTEIN"/>
    <property type="match status" value="1"/>
</dbReference>
<dbReference type="Pfam" id="PF01132">
    <property type="entry name" value="EFP"/>
    <property type="match status" value="1"/>
</dbReference>
<dbReference type="Pfam" id="PF08207">
    <property type="entry name" value="EFP_N"/>
    <property type="match status" value="1"/>
</dbReference>
<dbReference type="Pfam" id="PF09285">
    <property type="entry name" value="Elong-fact-P_C"/>
    <property type="match status" value="1"/>
</dbReference>
<dbReference type="PIRSF" id="PIRSF005901">
    <property type="entry name" value="EF-P"/>
    <property type="match status" value="1"/>
</dbReference>
<dbReference type="SMART" id="SM01185">
    <property type="entry name" value="EFP"/>
    <property type="match status" value="1"/>
</dbReference>
<dbReference type="SMART" id="SM00841">
    <property type="entry name" value="Elong-fact-P_C"/>
    <property type="match status" value="1"/>
</dbReference>
<dbReference type="SUPFAM" id="SSF50249">
    <property type="entry name" value="Nucleic acid-binding proteins"/>
    <property type="match status" value="2"/>
</dbReference>
<dbReference type="SUPFAM" id="SSF50104">
    <property type="entry name" value="Translation proteins SH3-like domain"/>
    <property type="match status" value="1"/>
</dbReference>
<dbReference type="PROSITE" id="PS01275">
    <property type="entry name" value="EFP"/>
    <property type="match status" value="1"/>
</dbReference>